<proteinExistence type="inferred from homology"/>
<organism>
    <name type="scientific">Pseudomonas fluorescens (strain Pf0-1)</name>
    <dbReference type="NCBI Taxonomy" id="205922"/>
    <lineage>
        <taxon>Bacteria</taxon>
        <taxon>Pseudomonadati</taxon>
        <taxon>Pseudomonadota</taxon>
        <taxon>Gammaproteobacteria</taxon>
        <taxon>Pseudomonadales</taxon>
        <taxon>Pseudomonadaceae</taxon>
        <taxon>Pseudomonas</taxon>
    </lineage>
</organism>
<reference key="1">
    <citation type="journal article" date="2009" name="Genome Biol.">
        <title>Genomic and genetic analyses of diversity and plant interactions of Pseudomonas fluorescens.</title>
        <authorList>
            <person name="Silby M.W."/>
            <person name="Cerdeno-Tarraga A.M."/>
            <person name="Vernikos G.S."/>
            <person name="Giddens S.R."/>
            <person name="Jackson R.W."/>
            <person name="Preston G.M."/>
            <person name="Zhang X.-X."/>
            <person name="Moon C.D."/>
            <person name="Gehrig S.M."/>
            <person name="Godfrey S.A.C."/>
            <person name="Knight C.G."/>
            <person name="Malone J.G."/>
            <person name="Robinson Z."/>
            <person name="Spiers A.J."/>
            <person name="Harris S."/>
            <person name="Challis G.L."/>
            <person name="Yaxley A.M."/>
            <person name="Harris D."/>
            <person name="Seeger K."/>
            <person name="Murphy L."/>
            <person name="Rutter S."/>
            <person name="Squares R."/>
            <person name="Quail M.A."/>
            <person name="Saunders E."/>
            <person name="Mavromatis K."/>
            <person name="Brettin T.S."/>
            <person name="Bentley S.D."/>
            <person name="Hothersall J."/>
            <person name="Stephens E."/>
            <person name="Thomas C.M."/>
            <person name="Parkhill J."/>
            <person name="Levy S.B."/>
            <person name="Rainey P.B."/>
            <person name="Thomson N.R."/>
        </authorList>
    </citation>
    <scope>NUCLEOTIDE SEQUENCE [LARGE SCALE GENOMIC DNA]</scope>
    <source>
        <strain>Pf0-1</strain>
    </source>
</reference>
<dbReference type="EC" id="1.6.1.1" evidence="1"/>
<dbReference type="EMBL" id="CP000094">
    <property type="protein sequence ID" value="ABA75599.1"/>
    <property type="molecule type" value="Genomic_DNA"/>
</dbReference>
<dbReference type="RefSeq" id="WP_007953019.1">
    <property type="nucleotide sequence ID" value="NC_007492.2"/>
</dbReference>
<dbReference type="SMR" id="Q3K9F5"/>
<dbReference type="KEGG" id="pfo:Pfl01_3862"/>
<dbReference type="eggNOG" id="COG1249">
    <property type="taxonomic scope" value="Bacteria"/>
</dbReference>
<dbReference type="HOGENOM" id="CLU_016755_0_0_6"/>
<dbReference type="Proteomes" id="UP000002704">
    <property type="component" value="Chromosome"/>
</dbReference>
<dbReference type="GO" id="GO:0005829">
    <property type="term" value="C:cytosol"/>
    <property type="evidence" value="ECO:0007669"/>
    <property type="project" value="TreeGrafter"/>
</dbReference>
<dbReference type="GO" id="GO:0004148">
    <property type="term" value="F:dihydrolipoyl dehydrogenase (NADH) activity"/>
    <property type="evidence" value="ECO:0007669"/>
    <property type="project" value="TreeGrafter"/>
</dbReference>
<dbReference type="GO" id="GO:0050660">
    <property type="term" value="F:flavin adenine dinucleotide binding"/>
    <property type="evidence" value="ECO:0007669"/>
    <property type="project" value="TreeGrafter"/>
</dbReference>
<dbReference type="GO" id="GO:0003957">
    <property type="term" value="F:NAD(P)+ transhydrogenase (Si-specific) activity"/>
    <property type="evidence" value="ECO:0007669"/>
    <property type="project" value="UniProtKB-UniRule"/>
</dbReference>
<dbReference type="GO" id="GO:0006103">
    <property type="term" value="P:2-oxoglutarate metabolic process"/>
    <property type="evidence" value="ECO:0007669"/>
    <property type="project" value="TreeGrafter"/>
</dbReference>
<dbReference type="GO" id="GO:0006739">
    <property type="term" value="P:NADP metabolic process"/>
    <property type="evidence" value="ECO:0007669"/>
    <property type="project" value="UniProtKB-UniRule"/>
</dbReference>
<dbReference type="FunFam" id="3.30.390.30:FF:000002">
    <property type="entry name" value="Soluble pyridine nucleotide transhydrogenase"/>
    <property type="match status" value="1"/>
</dbReference>
<dbReference type="FunFam" id="3.50.50.60:FF:000008">
    <property type="entry name" value="Soluble pyridine nucleotide transhydrogenase"/>
    <property type="match status" value="1"/>
</dbReference>
<dbReference type="Gene3D" id="3.30.390.30">
    <property type="match status" value="1"/>
</dbReference>
<dbReference type="Gene3D" id="3.50.50.60">
    <property type="entry name" value="FAD/NAD(P)-binding domain"/>
    <property type="match status" value="2"/>
</dbReference>
<dbReference type="HAMAP" id="MF_00247">
    <property type="entry name" value="SthA"/>
    <property type="match status" value="1"/>
</dbReference>
<dbReference type="InterPro" id="IPR050151">
    <property type="entry name" value="Class-I_Pyr_Nuc-Dis_Oxidored"/>
</dbReference>
<dbReference type="InterPro" id="IPR036188">
    <property type="entry name" value="FAD/NAD-bd_sf"/>
</dbReference>
<dbReference type="InterPro" id="IPR023753">
    <property type="entry name" value="FAD/NAD-binding_dom"/>
</dbReference>
<dbReference type="InterPro" id="IPR016156">
    <property type="entry name" value="FAD/NAD-linked_Rdtase_dimer_sf"/>
</dbReference>
<dbReference type="InterPro" id="IPR001100">
    <property type="entry name" value="Pyr_nuc-diS_OxRdtase"/>
</dbReference>
<dbReference type="InterPro" id="IPR004099">
    <property type="entry name" value="Pyr_nucl-diS_OxRdtase_dimer"/>
</dbReference>
<dbReference type="InterPro" id="IPR022962">
    <property type="entry name" value="STH_gammaproteobact"/>
</dbReference>
<dbReference type="NCBIfam" id="NF003585">
    <property type="entry name" value="PRK05249.1"/>
    <property type="match status" value="1"/>
</dbReference>
<dbReference type="PANTHER" id="PTHR22912">
    <property type="entry name" value="DISULFIDE OXIDOREDUCTASE"/>
    <property type="match status" value="1"/>
</dbReference>
<dbReference type="PANTHER" id="PTHR22912:SF93">
    <property type="entry name" value="SOLUBLE PYRIDINE NUCLEOTIDE TRANSHYDROGENASE"/>
    <property type="match status" value="1"/>
</dbReference>
<dbReference type="Pfam" id="PF07992">
    <property type="entry name" value="Pyr_redox_2"/>
    <property type="match status" value="1"/>
</dbReference>
<dbReference type="Pfam" id="PF02852">
    <property type="entry name" value="Pyr_redox_dim"/>
    <property type="match status" value="1"/>
</dbReference>
<dbReference type="PIRSF" id="PIRSF000350">
    <property type="entry name" value="Mercury_reductase_MerA"/>
    <property type="match status" value="1"/>
</dbReference>
<dbReference type="PRINTS" id="PR00368">
    <property type="entry name" value="FADPNR"/>
</dbReference>
<dbReference type="PRINTS" id="PR00411">
    <property type="entry name" value="PNDRDTASEI"/>
</dbReference>
<dbReference type="SUPFAM" id="SSF51905">
    <property type="entry name" value="FAD/NAD(P)-binding domain"/>
    <property type="match status" value="1"/>
</dbReference>
<dbReference type="SUPFAM" id="SSF55424">
    <property type="entry name" value="FAD/NAD-linked reductases, dimerisation (C-terminal) domain"/>
    <property type="match status" value="1"/>
</dbReference>
<sequence>MAVYNYDVVVLGSGPAGEGAAMNAAKAGRKVAMVDSRRQVGGNCTHLGTIPSKALRHSVRQIMQFNTNPMFRAIGEPRWFSFPDVLKSAEKVISKQVASRTGYYARNRVDVFFGTGSFADEQTIEVVCANGVVEKLVAKHIIIATGSRPYRPADIDFHHPRIYDSDTILSLGHTPRKLIVYGAGVIGCEYASIFSGLGVLVELVDNRGQLLSFLDSEISQALSYHFSNNNITVRHNEEYDRVEGVDNGVILHLKSGKKIKADALLWCNGRTGNTDQLGLENIGVKVNSRGQIEVDENYRTCVQNIYGAGDVIGWPSLASAAHDQGRSAAGSIVDNGSWRFVNDVPTGIYTIPEISSIGKNEQELTQAKVPYEVGKAFFKSMARAQIAGEPQGMLKILFHRETLEVLGVHCFGYQASEIVHIGQAIMNQPGELNTLKYFVNTTFNYPTMAEAYRVAAYDGLNRLF</sequence>
<protein>
    <recommendedName>
        <fullName evidence="1">Soluble pyridine nucleotide transhydrogenase</fullName>
        <shortName evidence="1">STH</shortName>
        <ecNumber evidence="1">1.6.1.1</ecNumber>
    </recommendedName>
    <alternativeName>
        <fullName evidence="1">NAD(P)(+) transhydrogenase [B-specific]</fullName>
    </alternativeName>
</protein>
<gene>
    <name evidence="1" type="primary">sthA</name>
    <name type="ordered locus">Pfl01_3862</name>
</gene>
<feature type="chain" id="PRO_0000260239" description="Soluble pyridine nucleotide transhydrogenase">
    <location>
        <begin position="1"/>
        <end position="464"/>
    </location>
</feature>
<feature type="binding site" evidence="1">
    <location>
        <begin position="35"/>
        <end position="44"/>
    </location>
    <ligand>
        <name>FAD</name>
        <dbReference type="ChEBI" id="CHEBI:57692"/>
    </ligand>
</feature>
<accession>Q3K9F5</accession>
<name>STHA_PSEPF</name>
<evidence type="ECO:0000255" key="1">
    <source>
        <dbReference type="HAMAP-Rule" id="MF_00247"/>
    </source>
</evidence>
<keyword id="KW-0963">Cytoplasm</keyword>
<keyword id="KW-0274">FAD</keyword>
<keyword id="KW-0285">Flavoprotein</keyword>
<keyword id="KW-0520">NAD</keyword>
<keyword id="KW-0521">NADP</keyword>
<keyword id="KW-0560">Oxidoreductase</keyword>
<comment type="function">
    <text evidence="1">Conversion of NADPH, generated by peripheral catabolic pathways, to NADH, which can enter the respiratory chain for energy generation.</text>
</comment>
<comment type="catalytic activity">
    <reaction evidence="1">
        <text>NAD(+) + NADPH = NADH + NADP(+)</text>
        <dbReference type="Rhea" id="RHEA:11692"/>
        <dbReference type="ChEBI" id="CHEBI:57540"/>
        <dbReference type="ChEBI" id="CHEBI:57783"/>
        <dbReference type="ChEBI" id="CHEBI:57945"/>
        <dbReference type="ChEBI" id="CHEBI:58349"/>
        <dbReference type="EC" id="1.6.1.1"/>
    </reaction>
</comment>
<comment type="cofactor">
    <cofactor evidence="1">
        <name>FAD</name>
        <dbReference type="ChEBI" id="CHEBI:57692"/>
    </cofactor>
    <text evidence="1">Binds 1 FAD per subunit.</text>
</comment>
<comment type="subcellular location">
    <subcellularLocation>
        <location evidence="1">Cytoplasm</location>
    </subcellularLocation>
</comment>
<comment type="similarity">
    <text evidence="1">Belongs to the class-I pyridine nucleotide-disulfide oxidoreductase family.</text>
</comment>